<sequence length="179" mass="20517">MPMAKKLNISRINELKTNAYDNIESYDDPDTPKALEQFTSQIKKVLQADPKMLESVPEYLPVALYGRVKFPSDAKLKWAHWINTATQPDWDEFKVTIGFNNADLPLVLAVRAYSEDLLIESCAVLYLLENQGKATPAPKRSADDDFEDEDSDYADYSDDDDDEGEEEDGYYDHYDDEDR</sequence>
<protein>
    <recommendedName>
        <fullName evidence="3">Adaptation to cold protein A</fullName>
    </recommendedName>
</protein>
<evidence type="ECO:0000256" key="1">
    <source>
        <dbReference type="SAM" id="MobiDB-lite"/>
    </source>
</evidence>
<evidence type="ECO:0000269" key="2">
    <source>
    </source>
</evidence>
<evidence type="ECO:0000303" key="3">
    <source>
    </source>
</evidence>
<evidence type="ECO:0000312" key="4">
    <source>
        <dbReference type="EMBL" id="AAN54901.1"/>
    </source>
</evidence>
<keyword id="KW-1185">Reference proteome</keyword>
<dbReference type="EMBL" id="AE014299">
    <property type="protein sequence ID" value="AAN54901.1"/>
    <property type="molecule type" value="Genomic_DNA"/>
</dbReference>
<dbReference type="RefSeq" id="NP_717457.1">
    <property type="nucleotide sequence ID" value="NC_004347.2"/>
</dbReference>
<dbReference type="SMR" id="Q8EFW6"/>
<dbReference type="STRING" id="211586.SO_1849"/>
<dbReference type="PaxDb" id="211586-SO_1849"/>
<dbReference type="KEGG" id="son:SO_1849"/>
<dbReference type="PATRIC" id="fig|211586.12.peg.1777"/>
<dbReference type="eggNOG" id="ENOG5032M8N">
    <property type="taxonomic scope" value="Bacteria"/>
</dbReference>
<dbReference type="HOGENOM" id="CLU_1502481_0_0_6"/>
<dbReference type="OrthoDB" id="5769186at2"/>
<dbReference type="BioCyc" id="SONE211586:G1GMP-1697-MONOMER"/>
<dbReference type="Proteomes" id="UP000008186">
    <property type="component" value="Chromosome"/>
</dbReference>
<gene>
    <name evidence="3" type="primary">atcA</name>
    <name evidence="4" type="ordered locus">SO_1849</name>
</gene>
<organism>
    <name type="scientific">Shewanella oneidensis (strain ATCC 700550 / JCM 31522 / CIP 106686 / LMG 19005 / NCIMB 14063 / MR-1)</name>
    <dbReference type="NCBI Taxonomy" id="211586"/>
    <lineage>
        <taxon>Bacteria</taxon>
        <taxon>Pseudomonadati</taxon>
        <taxon>Pseudomonadota</taxon>
        <taxon>Gammaproteobacteria</taxon>
        <taxon>Alteromonadales</taxon>
        <taxon>Shewanellaceae</taxon>
        <taxon>Shewanella</taxon>
    </lineage>
</organism>
<accession>Q8EFW6</accession>
<proteinExistence type="evidence at transcript level"/>
<name>ATCA_SHEON</name>
<reference key="1">
    <citation type="journal article" date="2002" name="Nat. Biotechnol.">
        <title>Genome sequence of the dissimilatory metal ion-reducing bacterium Shewanella oneidensis.</title>
        <authorList>
            <person name="Heidelberg J.F."/>
            <person name="Paulsen I.T."/>
            <person name="Nelson K.E."/>
            <person name="Gaidos E.J."/>
            <person name="Nelson W.C."/>
            <person name="Read T.D."/>
            <person name="Eisen J.A."/>
            <person name="Seshadri R."/>
            <person name="Ward N.L."/>
            <person name="Methe B.A."/>
            <person name="Clayton R.A."/>
            <person name="Meyer T."/>
            <person name="Tsapin A."/>
            <person name="Scott J."/>
            <person name="Beanan M.J."/>
            <person name="Brinkac L.M."/>
            <person name="Daugherty S.C."/>
            <person name="DeBoy R.T."/>
            <person name="Dodson R.J."/>
            <person name="Durkin A.S."/>
            <person name="Haft D.H."/>
            <person name="Kolonay J.F."/>
            <person name="Madupu R."/>
            <person name="Peterson J.D."/>
            <person name="Umayam L.A."/>
            <person name="White O."/>
            <person name="Wolf A.M."/>
            <person name="Vamathevan J.J."/>
            <person name="Weidman J.F."/>
            <person name="Impraim M."/>
            <person name="Lee K."/>
            <person name="Berry K.J."/>
            <person name="Lee C."/>
            <person name="Mueller J."/>
            <person name="Khouri H.M."/>
            <person name="Gill J."/>
            <person name="Utterback T.R."/>
            <person name="McDonald L.A."/>
            <person name="Feldblyum T.V."/>
            <person name="Smith H.O."/>
            <person name="Venter J.C."/>
            <person name="Nealson K.H."/>
            <person name="Fraser C.M."/>
        </authorList>
    </citation>
    <scope>NUCLEOTIDE SEQUENCE [LARGE SCALE GENOMIC DNA]</scope>
    <source>
        <strain>ATCC 700550 / JCM 31522 / CIP 106686 / LMG 19005 / NCIMB 14063 / MR-1</strain>
    </source>
</reference>
<reference key="2">
    <citation type="journal article" date="2019" name="Commun. Biol.">
        <title>Cold adaptation in the environmental bacterium Shewanella oneidensis is controlled by a J-domain co-chaperone protein network.</title>
        <authorList>
            <person name="Maillot N.J."/>
            <person name="Honore F.A."/>
            <person name="Byrne D."/>
            <person name="Mejean V."/>
            <person name="Genest O."/>
        </authorList>
    </citation>
    <scope>FUNCTION</scope>
    <scope>INDUCTION</scope>
    <scope>DISRUPTION PHENOTYPE</scope>
    <source>
        <strain>MR1-R</strain>
    </source>
</reference>
<feature type="chain" id="PRO_0000458834" description="Adaptation to cold protein A">
    <location>
        <begin position="1"/>
        <end position="179"/>
    </location>
</feature>
<feature type="region of interest" description="Disordered" evidence="1">
    <location>
        <begin position="133"/>
        <end position="179"/>
    </location>
</feature>
<feature type="compositionally biased region" description="Acidic residues" evidence="1">
    <location>
        <begin position="144"/>
        <end position="179"/>
    </location>
</feature>
<comment type="function">
    <text evidence="2">Part of an operon involved in cold adaptation.</text>
</comment>
<comment type="induction">
    <text evidence="2">Part of the atcJABC operon (PubMed:31482142). The operon is constitutively expressed, and expression shows only a very slight increase at low temperature (PubMed:31482142).</text>
</comment>
<comment type="disruption phenotype">
    <text evidence="2">Deletion of the gene does not affect growth at low temperature.</text>
</comment>